<dbReference type="EC" id="2.1.1.199" evidence="1"/>
<dbReference type="EMBL" id="AP008955">
    <property type="protein sequence ID" value="BAH44822.1"/>
    <property type="molecule type" value="Genomic_DNA"/>
</dbReference>
<dbReference type="RefSeq" id="WP_015892104.1">
    <property type="nucleotide sequence ID" value="NC_012491.1"/>
</dbReference>
<dbReference type="SMR" id="C0ZGB3"/>
<dbReference type="STRING" id="358681.BBR47_38450"/>
<dbReference type="KEGG" id="bbe:BBR47_38450"/>
<dbReference type="eggNOG" id="COG0275">
    <property type="taxonomic scope" value="Bacteria"/>
</dbReference>
<dbReference type="HOGENOM" id="CLU_038422_2_0_9"/>
<dbReference type="Proteomes" id="UP000001877">
    <property type="component" value="Chromosome"/>
</dbReference>
<dbReference type="GO" id="GO:0005737">
    <property type="term" value="C:cytoplasm"/>
    <property type="evidence" value="ECO:0007669"/>
    <property type="project" value="UniProtKB-SubCell"/>
</dbReference>
<dbReference type="GO" id="GO:0071424">
    <property type="term" value="F:rRNA (cytosine-N4-)-methyltransferase activity"/>
    <property type="evidence" value="ECO:0007669"/>
    <property type="project" value="UniProtKB-UniRule"/>
</dbReference>
<dbReference type="GO" id="GO:0070475">
    <property type="term" value="P:rRNA base methylation"/>
    <property type="evidence" value="ECO:0007669"/>
    <property type="project" value="UniProtKB-UniRule"/>
</dbReference>
<dbReference type="FunFam" id="1.10.150.170:FF:000001">
    <property type="entry name" value="Ribosomal RNA small subunit methyltransferase H"/>
    <property type="match status" value="1"/>
</dbReference>
<dbReference type="Gene3D" id="1.10.150.170">
    <property type="entry name" value="Putative methyltransferase TM0872, insert domain"/>
    <property type="match status" value="1"/>
</dbReference>
<dbReference type="Gene3D" id="3.40.50.150">
    <property type="entry name" value="Vaccinia Virus protein VP39"/>
    <property type="match status" value="1"/>
</dbReference>
<dbReference type="HAMAP" id="MF_01007">
    <property type="entry name" value="16SrRNA_methyltr_H"/>
    <property type="match status" value="1"/>
</dbReference>
<dbReference type="InterPro" id="IPR002903">
    <property type="entry name" value="RsmH"/>
</dbReference>
<dbReference type="InterPro" id="IPR023397">
    <property type="entry name" value="SAM-dep_MeTrfase_MraW_recog"/>
</dbReference>
<dbReference type="InterPro" id="IPR029063">
    <property type="entry name" value="SAM-dependent_MTases_sf"/>
</dbReference>
<dbReference type="NCBIfam" id="TIGR00006">
    <property type="entry name" value="16S rRNA (cytosine(1402)-N(4))-methyltransferase RsmH"/>
    <property type="match status" value="1"/>
</dbReference>
<dbReference type="PANTHER" id="PTHR11265:SF0">
    <property type="entry name" value="12S RRNA N4-METHYLCYTIDINE METHYLTRANSFERASE"/>
    <property type="match status" value="1"/>
</dbReference>
<dbReference type="PANTHER" id="PTHR11265">
    <property type="entry name" value="S-ADENOSYL-METHYLTRANSFERASE MRAW"/>
    <property type="match status" value="1"/>
</dbReference>
<dbReference type="Pfam" id="PF01795">
    <property type="entry name" value="Methyltransf_5"/>
    <property type="match status" value="1"/>
</dbReference>
<dbReference type="PIRSF" id="PIRSF004486">
    <property type="entry name" value="MraW"/>
    <property type="match status" value="1"/>
</dbReference>
<dbReference type="SUPFAM" id="SSF81799">
    <property type="entry name" value="Putative methyltransferase TM0872, insert domain"/>
    <property type="match status" value="1"/>
</dbReference>
<dbReference type="SUPFAM" id="SSF53335">
    <property type="entry name" value="S-adenosyl-L-methionine-dependent methyltransferases"/>
    <property type="match status" value="1"/>
</dbReference>
<gene>
    <name evidence="1" type="primary">rsmH</name>
    <name type="synonym">mraW</name>
    <name type="ordered locus">BBR47_38450</name>
</gene>
<keyword id="KW-0963">Cytoplasm</keyword>
<keyword id="KW-0489">Methyltransferase</keyword>
<keyword id="KW-1185">Reference proteome</keyword>
<keyword id="KW-0698">rRNA processing</keyword>
<keyword id="KW-0949">S-adenosyl-L-methionine</keyword>
<keyword id="KW-0808">Transferase</keyword>
<organism>
    <name type="scientific">Brevibacillus brevis (strain 47 / JCM 6285 / NBRC 100599)</name>
    <dbReference type="NCBI Taxonomy" id="358681"/>
    <lineage>
        <taxon>Bacteria</taxon>
        <taxon>Bacillati</taxon>
        <taxon>Bacillota</taxon>
        <taxon>Bacilli</taxon>
        <taxon>Bacillales</taxon>
        <taxon>Paenibacillaceae</taxon>
        <taxon>Brevibacillus</taxon>
    </lineage>
</organism>
<reference key="1">
    <citation type="submission" date="2005-03" db="EMBL/GenBank/DDBJ databases">
        <title>Brevibacillus brevis strain 47, complete genome.</title>
        <authorList>
            <person name="Hosoyama A."/>
            <person name="Yamada R."/>
            <person name="Hongo Y."/>
            <person name="Terui Y."/>
            <person name="Ankai A."/>
            <person name="Masuyama W."/>
            <person name="Sekiguchi M."/>
            <person name="Takeda T."/>
            <person name="Asano K."/>
            <person name="Ohji S."/>
            <person name="Ichikawa N."/>
            <person name="Narita S."/>
            <person name="Aoki N."/>
            <person name="Miura H."/>
            <person name="Matsushita S."/>
            <person name="Sekigawa T."/>
            <person name="Yamagata H."/>
            <person name="Yoshikawa H."/>
            <person name="Udaka S."/>
            <person name="Tanikawa S."/>
            <person name="Fujita N."/>
        </authorList>
    </citation>
    <scope>NUCLEOTIDE SEQUENCE [LARGE SCALE GENOMIC DNA]</scope>
    <source>
        <strain>47 / JCM 6285 / NBRC 100599</strain>
    </source>
</reference>
<feature type="chain" id="PRO_0000386760" description="Ribosomal RNA small subunit methyltransferase H">
    <location>
        <begin position="1"/>
        <end position="314"/>
    </location>
</feature>
<feature type="binding site" evidence="1">
    <location>
        <begin position="36"/>
        <end position="38"/>
    </location>
    <ligand>
        <name>S-adenosyl-L-methionine</name>
        <dbReference type="ChEBI" id="CHEBI:59789"/>
    </ligand>
</feature>
<feature type="binding site" evidence="1">
    <location>
        <position position="56"/>
    </location>
    <ligand>
        <name>S-adenosyl-L-methionine</name>
        <dbReference type="ChEBI" id="CHEBI:59789"/>
    </ligand>
</feature>
<feature type="binding site" evidence="1">
    <location>
        <position position="83"/>
    </location>
    <ligand>
        <name>S-adenosyl-L-methionine</name>
        <dbReference type="ChEBI" id="CHEBI:59789"/>
    </ligand>
</feature>
<feature type="binding site" evidence="1">
    <location>
        <position position="104"/>
    </location>
    <ligand>
        <name>S-adenosyl-L-methionine</name>
        <dbReference type="ChEBI" id="CHEBI:59789"/>
    </ligand>
</feature>
<feature type="binding site" evidence="1">
    <location>
        <position position="111"/>
    </location>
    <ligand>
        <name>S-adenosyl-L-methionine</name>
        <dbReference type="ChEBI" id="CHEBI:59789"/>
    </ligand>
</feature>
<name>RSMH_BREBN</name>
<evidence type="ECO:0000255" key="1">
    <source>
        <dbReference type="HAMAP-Rule" id="MF_01007"/>
    </source>
</evidence>
<accession>C0ZGB3</accession>
<comment type="function">
    <text evidence="1">Specifically methylates the N4 position of cytidine in position 1402 (C1402) of 16S rRNA.</text>
</comment>
<comment type="catalytic activity">
    <reaction evidence="1">
        <text>cytidine(1402) in 16S rRNA + S-adenosyl-L-methionine = N(4)-methylcytidine(1402) in 16S rRNA + S-adenosyl-L-homocysteine + H(+)</text>
        <dbReference type="Rhea" id="RHEA:42928"/>
        <dbReference type="Rhea" id="RHEA-COMP:10286"/>
        <dbReference type="Rhea" id="RHEA-COMP:10287"/>
        <dbReference type="ChEBI" id="CHEBI:15378"/>
        <dbReference type="ChEBI" id="CHEBI:57856"/>
        <dbReference type="ChEBI" id="CHEBI:59789"/>
        <dbReference type="ChEBI" id="CHEBI:74506"/>
        <dbReference type="ChEBI" id="CHEBI:82748"/>
        <dbReference type="EC" id="2.1.1.199"/>
    </reaction>
</comment>
<comment type="subcellular location">
    <subcellularLocation>
        <location evidence="1">Cytoplasm</location>
    </subcellularLocation>
</comment>
<comment type="similarity">
    <text evidence="1">Belongs to the methyltransferase superfamily. RsmH family.</text>
</comment>
<protein>
    <recommendedName>
        <fullName evidence="1">Ribosomal RNA small subunit methyltransferase H</fullName>
        <ecNumber evidence="1">2.1.1.199</ecNumber>
    </recommendedName>
    <alternativeName>
        <fullName evidence="1">16S rRNA m(4)C1402 methyltransferase</fullName>
    </alternativeName>
    <alternativeName>
        <fullName evidence="1">rRNA (cytosine-N(4)-)-methyltransferase RsmH</fullName>
    </alternativeName>
</protein>
<proteinExistence type="inferred from homology"/>
<sequence>MTTLSFHHVTVLMDEAVQGLNIRPGGIYVDCTLGGAGHSSLIASKLTEGGRLIAIDQDDWALDNARERLASYMDRVTLVKSNFRHIKDIVKDLGLSGVDGVLFDLGVSSPQLDEGERGFSYNADAPLDMRMDQQAPLSAYDIINEWDEEEIAKIIWLYGEEKFSRRIARQIVQQRKKQPIQTTGELVELIKEGIPAAARRTGPHPAKRTFQAIRIAVNDELDAFKEAVVDAIEVLNPEGRVSVITFHSLEDRICKQIYQDFSKGCTCPPAFPICTCGNKAVVKVITRKPILPSEEELEANKRARSAKLRVAEKL</sequence>